<dbReference type="EMBL" id="CP000230">
    <property type="protein sequence ID" value="ABC23477.1"/>
    <property type="molecule type" value="Genomic_DNA"/>
</dbReference>
<dbReference type="RefSeq" id="WP_011390430.1">
    <property type="nucleotide sequence ID" value="NC_007643.1"/>
</dbReference>
<dbReference type="RefSeq" id="YP_427764.1">
    <property type="nucleotide sequence ID" value="NC_007643.1"/>
</dbReference>
<dbReference type="SMR" id="Q2RQW8"/>
<dbReference type="STRING" id="269796.Rru_A2680"/>
<dbReference type="EnsemblBacteria" id="ABC23477">
    <property type="protein sequence ID" value="ABC23477"/>
    <property type="gene ID" value="Rru_A2680"/>
</dbReference>
<dbReference type="KEGG" id="rru:Rru_A2680"/>
<dbReference type="PATRIC" id="fig|269796.9.peg.2787"/>
<dbReference type="eggNOG" id="COG0255">
    <property type="taxonomic scope" value="Bacteria"/>
</dbReference>
<dbReference type="HOGENOM" id="CLU_158491_1_0_5"/>
<dbReference type="PhylomeDB" id="Q2RQW8"/>
<dbReference type="Proteomes" id="UP000001929">
    <property type="component" value="Chromosome"/>
</dbReference>
<dbReference type="GO" id="GO:0022625">
    <property type="term" value="C:cytosolic large ribosomal subunit"/>
    <property type="evidence" value="ECO:0007669"/>
    <property type="project" value="TreeGrafter"/>
</dbReference>
<dbReference type="GO" id="GO:0003735">
    <property type="term" value="F:structural constituent of ribosome"/>
    <property type="evidence" value="ECO:0007669"/>
    <property type="project" value="InterPro"/>
</dbReference>
<dbReference type="GO" id="GO:0006412">
    <property type="term" value="P:translation"/>
    <property type="evidence" value="ECO:0007669"/>
    <property type="project" value="UniProtKB-UniRule"/>
</dbReference>
<dbReference type="CDD" id="cd00427">
    <property type="entry name" value="Ribosomal_L29_HIP"/>
    <property type="match status" value="1"/>
</dbReference>
<dbReference type="FunFam" id="1.10.287.310:FF:000001">
    <property type="entry name" value="50S ribosomal protein L29"/>
    <property type="match status" value="1"/>
</dbReference>
<dbReference type="Gene3D" id="1.10.287.310">
    <property type="match status" value="1"/>
</dbReference>
<dbReference type="HAMAP" id="MF_00374">
    <property type="entry name" value="Ribosomal_uL29"/>
    <property type="match status" value="1"/>
</dbReference>
<dbReference type="InterPro" id="IPR050063">
    <property type="entry name" value="Ribosomal_protein_uL29"/>
</dbReference>
<dbReference type="InterPro" id="IPR001854">
    <property type="entry name" value="Ribosomal_uL29"/>
</dbReference>
<dbReference type="InterPro" id="IPR018254">
    <property type="entry name" value="Ribosomal_uL29_CS"/>
</dbReference>
<dbReference type="InterPro" id="IPR036049">
    <property type="entry name" value="Ribosomal_uL29_sf"/>
</dbReference>
<dbReference type="NCBIfam" id="TIGR00012">
    <property type="entry name" value="L29"/>
    <property type="match status" value="1"/>
</dbReference>
<dbReference type="PANTHER" id="PTHR10916">
    <property type="entry name" value="60S RIBOSOMAL PROTEIN L35/50S RIBOSOMAL PROTEIN L29"/>
    <property type="match status" value="1"/>
</dbReference>
<dbReference type="PANTHER" id="PTHR10916:SF0">
    <property type="entry name" value="LARGE RIBOSOMAL SUBUNIT PROTEIN UL29C"/>
    <property type="match status" value="1"/>
</dbReference>
<dbReference type="Pfam" id="PF00831">
    <property type="entry name" value="Ribosomal_L29"/>
    <property type="match status" value="1"/>
</dbReference>
<dbReference type="SUPFAM" id="SSF46561">
    <property type="entry name" value="Ribosomal protein L29 (L29p)"/>
    <property type="match status" value="1"/>
</dbReference>
<dbReference type="PROSITE" id="PS00579">
    <property type="entry name" value="RIBOSOMAL_L29"/>
    <property type="match status" value="1"/>
</dbReference>
<evidence type="ECO:0000255" key="1">
    <source>
        <dbReference type="HAMAP-Rule" id="MF_00374"/>
    </source>
</evidence>
<evidence type="ECO:0000305" key="2"/>
<comment type="similarity">
    <text evidence="1">Belongs to the universal ribosomal protein uL29 family.</text>
</comment>
<reference key="1">
    <citation type="journal article" date="2011" name="Stand. Genomic Sci.">
        <title>Complete genome sequence of Rhodospirillum rubrum type strain (S1).</title>
        <authorList>
            <person name="Munk A.C."/>
            <person name="Copeland A."/>
            <person name="Lucas S."/>
            <person name="Lapidus A."/>
            <person name="Del Rio T.G."/>
            <person name="Barry K."/>
            <person name="Detter J.C."/>
            <person name="Hammon N."/>
            <person name="Israni S."/>
            <person name="Pitluck S."/>
            <person name="Brettin T."/>
            <person name="Bruce D."/>
            <person name="Han C."/>
            <person name="Tapia R."/>
            <person name="Gilna P."/>
            <person name="Schmutz J."/>
            <person name="Larimer F."/>
            <person name="Land M."/>
            <person name="Kyrpides N.C."/>
            <person name="Mavromatis K."/>
            <person name="Richardson P."/>
            <person name="Rohde M."/>
            <person name="Goeker M."/>
            <person name="Klenk H.P."/>
            <person name="Zhang Y."/>
            <person name="Roberts G.P."/>
            <person name="Reslewic S."/>
            <person name="Schwartz D.C."/>
        </authorList>
    </citation>
    <scope>NUCLEOTIDE SEQUENCE [LARGE SCALE GENOMIC DNA]</scope>
    <source>
        <strain>ATCC 11170 / ATH 1.1.1 / DSM 467 / LMG 4362 / NCIMB 8255 / S1</strain>
    </source>
</reference>
<protein>
    <recommendedName>
        <fullName evidence="1">Large ribosomal subunit protein uL29</fullName>
    </recommendedName>
    <alternativeName>
        <fullName evidence="2">50S ribosomal protein L29</fullName>
    </alternativeName>
</protein>
<feature type="chain" id="PRO_1000007584" description="Large ribosomal subunit protein uL29">
    <location>
        <begin position="1"/>
        <end position="68"/>
    </location>
</feature>
<accession>Q2RQW8</accession>
<proteinExistence type="inferred from homology"/>
<organism>
    <name type="scientific">Rhodospirillum rubrum (strain ATCC 11170 / ATH 1.1.1 / DSM 467 / LMG 4362 / NCIMB 8255 / S1)</name>
    <dbReference type="NCBI Taxonomy" id="269796"/>
    <lineage>
        <taxon>Bacteria</taxon>
        <taxon>Pseudomonadati</taxon>
        <taxon>Pseudomonadota</taxon>
        <taxon>Alphaproteobacteria</taxon>
        <taxon>Rhodospirillales</taxon>
        <taxon>Rhodospirillaceae</taxon>
        <taxon>Rhodospirillum</taxon>
    </lineage>
</organism>
<gene>
    <name evidence="1" type="primary">rpmC</name>
    <name type="ordered locus">Rru_A2680</name>
</gene>
<name>RL29_RHORT</name>
<sequence length="68" mass="7815">MSAAEDTRSKTDDQLKDSLLELKKEQFNLRFQAASGQLENTARVRTVRREIARIKSVRGERNRAPQAK</sequence>
<keyword id="KW-1185">Reference proteome</keyword>
<keyword id="KW-0687">Ribonucleoprotein</keyword>
<keyword id="KW-0689">Ribosomal protein</keyword>